<name>CSD_STAAN</name>
<reference key="1">
    <citation type="journal article" date="2001" name="Lancet">
        <title>Whole genome sequencing of meticillin-resistant Staphylococcus aureus.</title>
        <authorList>
            <person name="Kuroda M."/>
            <person name="Ohta T."/>
            <person name="Uchiyama I."/>
            <person name="Baba T."/>
            <person name="Yuzawa H."/>
            <person name="Kobayashi I."/>
            <person name="Cui L."/>
            <person name="Oguchi A."/>
            <person name="Aoki K."/>
            <person name="Nagai Y."/>
            <person name="Lian J.-Q."/>
            <person name="Ito T."/>
            <person name="Kanamori M."/>
            <person name="Matsumaru H."/>
            <person name="Maruyama A."/>
            <person name="Murakami H."/>
            <person name="Hosoyama A."/>
            <person name="Mizutani-Ui Y."/>
            <person name="Takahashi N.K."/>
            <person name="Sawano T."/>
            <person name="Inoue R."/>
            <person name="Kaito C."/>
            <person name="Sekimizu K."/>
            <person name="Hirakawa H."/>
            <person name="Kuhara S."/>
            <person name="Goto S."/>
            <person name="Yabuzaki J."/>
            <person name="Kanehisa M."/>
            <person name="Yamashita A."/>
            <person name="Oshima K."/>
            <person name="Furuya K."/>
            <person name="Yoshino C."/>
            <person name="Shiba T."/>
            <person name="Hattori M."/>
            <person name="Ogasawara N."/>
            <person name="Hayashi H."/>
            <person name="Hiramatsu K."/>
        </authorList>
    </citation>
    <scope>NUCLEOTIDE SEQUENCE [LARGE SCALE GENOMIC DNA]</scope>
    <source>
        <strain>N315</strain>
    </source>
</reference>
<reference key="2">
    <citation type="journal article" date="2005" name="J. Microbiol. Methods">
        <title>Correlation of proteomic and transcriptomic profiles of Staphylococcus aureus during the post-exponential phase of growth.</title>
        <authorList>
            <person name="Scherl A."/>
            <person name="Francois P."/>
            <person name="Bento M."/>
            <person name="Deshusses J.M."/>
            <person name="Charbonnier Y."/>
            <person name="Converset V."/>
            <person name="Huyghe A."/>
            <person name="Walter N."/>
            <person name="Hoogland C."/>
            <person name="Appel R.D."/>
            <person name="Sanchez J.-C."/>
            <person name="Zimmermann-Ivol C.G."/>
            <person name="Corthals G.L."/>
            <person name="Hochstrasser D.F."/>
            <person name="Schrenzel J."/>
        </authorList>
    </citation>
    <scope>IDENTIFICATION BY MASS SPECTROMETRY</scope>
    <source>
        <strain>N315</strain>
    </source>
</reference>
<reference key="3">
    <citation type="submission" date="2007-10" db="UniProtKB">
        <title>Shotgun proteomic analysis of total and membrane protein extracts of S. aureus strain N315.</title>
        <authorList>
            <person name="Vaezzadeh A.R."/>
            <person name="Deshusses J."/>
            <person name="Lescuyer P."/>
            <person name="Hochstrasser D.F."/>
        </authorList>
    </citation>
    <scope>IDENTIFICATION BY MASS SPECTROMETRY [LARGE SCALE ANALYSIS]</scope>
    <source>
        <strain>N315</strain>
    </source>
</reference>
<accession>P99177</accession>
<accession>Q99VG1</accession>
<keyword id="KW-0663">Pyridoxal phosphate</keyword>
<keyword id="KW-0808">Transferase</keyword>
<dbReference type="EC" id="2.8.1.7"/>
<dbReference type="EMBL" id="BA000018">
    <property type="protein sequence ID" value="BAB42015.1"/>
    <property type="molecule type" value="Genomic_DNA"/>
</dbReference>
<dbReference type="PIR" id="D89857">
    <property type="entry name" value="D89857"/>
</dbReference>
<dbReference type="SMR" id="P99177"/>
<dbReference type="EnsemblBacteria" id="BAB42015">
    <property type="protein sequence ID" value="BAB42015"/>
    <property type="gene ID" value="BAB42015"/>
</dbReference>
<dbReference type="KEGG" id="sau:SA0776"/>
<dbReference type="HOGENOM" id="CLU_003433_2_5_9"/>
<dbReference type="GO" id="GO:0031071">
    <property type="term" value="F:cysteine desulfurase activity"/>
    <property type="evidence" value="ECO:0007669"/>
    <property type="project" value="UniProtKB-EC"/>
</dbReference>
<dbReference type="GO" id="GO:0030170">
    <property type="term" value="F:pyridoxal phosphate binding"/>
    <property type="evidence" value="ECO:0007669"/>
    <property type="project" value="InterPro"/>
</dbReference>
<dbReference type="GO" id="GO:0006534">
    <property type="term" value="P:cysteine metabolic process"/>
    <property type="evidence" value="ECO:0007669"/>
    <property type="project" value="InterPro"/>
</dbReference>
<dbReference type="CDD" id="cd06453">
    <property type="entry name" value="SufS_like"/>
    <property type="match status" value="1"/>
</dbReference>
<dbReference type="Gene3D" id="3.90.1150.10">
    <property type="entry name" value="Aspartate Aminotransferase, domain 1"/>
    <property type="match status" value="1"/>
</dbReference>
<dbReference type="Gene3D" id="3.40.640.10">
    <property type="entry name" value="Type I PLP-dependent aspartate aminotransferase-like (Major domain)"/>
    <property type="match status" value="1"/>
</dbReference>
<dbReference type="InterPro" id="IPR000192">
    <property type="entry name" value="Aminotrans_V_dom"/>
</dbReference>
<dbReference type="InterPro" id="IPR010970">
    <property type="entry name" value="Cys_dSase_SufS"/>
</dbReference>
<dbReference type="InterPro" id="IPR016454">
    <property type="entry name" value="Cysteine_dSase"/>
</dbReference>
<dbReference type="InterPro" id="IPR015424">
    <property type="entry name" value="PyrdxlP-dep_Trfase"/>
</dbReference>
<dbReference type="InterPro" id="IPR015421">
    <property type="entry name" value="PyrdxlP-dep_Trfase_major"/>
</dbReference>
<dbReference type="InterPro" id="IPR015422">
    <property type="entry name" value="PyrdxlP-dep_Trfase_small"/>
</dbReference>
<dbReference type="NCBIfam" id="TIGR01979">
    <property type="entry name" value="sufS"/>
    <property type="match status" value="1"/>
</dbReference>
<dbReference type="PANTHER" id="PTHR43586">
    <property type="entry name" value="CYSTEINE DESULFURASE"/>
    <property type="match status" value="1"/>
</dbReference>
<dbReference type="PANTHER" id="PTHR43586:SF8">
    <property type="entry name" value="CYSTEINE DESULFURASE 1, CHLOROPLASTIC"/>
    <property type="match status" value="1"/>
</dbReference>
<dbReference type="Pfam" id="PF00266">
    <property type="entry name" value="Aminotran_5"/>
    <property type="match status" value="1"/>
</dbReference>
<dbReference type="PIRSF" id="PIRSF005572">
    <property type="entry name" value="NifS"/>
    <property type="match status" value="1"/>
</dbReference>
<dbReference type="SUPFAM" id="SSF53383">
    <property type="entry name" value="PLP-dependent transferases"/>
    <property type="match status" value="1"/>
</dbReference>
<comment type="function">
    <text evidence="1">Catalyzes the removal of elemental sulfur and selenium atoms from L-cysteine, L-cystine, L-selenocysteine, and L-selenocystine to produce L-alanine.</text>
</comment>
<comment type="catalytic activity">
    <reaction>
        <text>(sulfur carrier)-H + L-cysteine = (sulfur carrier)-SH + L-alanine</text>
        <dbReference type="Rhea" id="RHEA:43892"/>
        <dbReference type="Rhea" id="RHEA-COMP:14737"/>
        <dbReference type="Rhea" id="RHEA-COMP:14739"/>
        <dbReference type="ChEBI" id="CHEBI:29917"/>
        <dbReference type="ChEBI" id="CHEBI:35235"/>
        <dbReference type="ChEBI" id="CHEBI:57972"/>
        <dbReference type="ChEBI" id="CHEBI:64428"/>
        <dbReference type="EC" id="2.8.1.7"/>
    </reaction>
</comment>
<comment type="cofactor">
    <cofactor evidence="1">
        <name>pyridoxal 5'-phosphate</name>
        <dbReference type="ChEBI" id="CHEBI:597326"/>
    </cofactor>
</comment>
<comment type="similarity">
    <text evidence="2">Belongs to the class-V pyridoxal-phosphate-dependent aminotransferase family. Csd subfamily.</text>
</comment>
<sequence>MAEHSFDVNEVIKDFPILDQKVNGKRLAYLDSTATSQTPMQVLNVLEDYYKRYNSNVHRGVHTLGSLATDGYENARETVRRFINAKYFEEIIFTRGTTASINLVAHSYGDANVEEGDEIVVTEMEHHANIVPWQQLAKRKNATLKFIPMTADGELNIEDIKQTINDKTKIVAIAHISNVLGTINDVKTIAEIAHQHGAIISVDGAQAAPHMKLDMQEMNADFYSFSGHKMLGPTGIGVLFGKRELLQKMEPIEFGGDMIDFVSKYDATWADLPTKFEAGTPLIAQAIGLAEAIRYLERIGFDAIHKYEQELTIYAYEQMSAIEGIEIYGPPKDRRAGVITFNLQDVHPHDVATAVDTEGVAVRAGHHCAQPLMKWLNVSSTARASFYIYNTKEDIDQLINALKQTKEFFSYEF</sequence>
<protein>
    <recommendedName>
        <fullName>Probable cysteine desulfurase</fullName>
        <ecNumber>2.8.1.7</ecNumber>
    </recommendedName>
</protein>
<feature type="chain" id="PRO_0000150311" description="Probable cysteine desulfurase">
    <location>
        <begin position="1"/>
        <end position="413"/>
    </location>
</feature>
<feature type="active site" description="Cysteine persulfide intermediate" evidence="1">
    <location>
        <position position="368"/>
    </location>
</feature>
<feature type="modified residue" description="N6-(pyridoxal phosphate)lysine" evidence="1">
    <location>
        <position position="229"/>
    </location>
</feature>
<gene>
    <name type="primary">csd</name>
    <name type="ordered locus">SA0776</name>
</gene>
<organism>
    <name type="scientific">Staphylococcus aureus (strain N315)</name>
    <dbReference type="NCBI Taxonomy" id="158879"/>
    <lineage>
        <taxon>Bacteria</taxon>
        <taxon>Bacillati</taxon>
        <taxon>Bacillota</taxon>
        <taxon>Bacilli</taxon>
        <taxon>Bacillales</taxon>
        <taxon>Staphylococcaceae</taxon>
        <taxon>Staphylococcus</taxon>
    </lineage>
</organism>
<proteinExistence type="evidence at protein level"/>
<evidence type="ECO:0000250" key="1"/>
<evidence type="ECO:0000305" key="2"/>